<gene>
    <name evidence="1" type="primary">trmA</name>
    <name type="ordered locus">AZOSEA03070</name>
    <name type="ORF">ebA595</name>
</gene>
<dbReference type="EC" id="2.1.1.-" evidence="1"/>
<dbReference type="EC" id="2.1.1.35" evidence="1"/>
<dbReference type="EMBL" id="CR555306">
    <property type="protein sequence ID" value="CAI06429.1"/>
    <property type="molecule type" value="Genomic_DNA"/>
</dbReference>
<dbReference type="RefSeq" id="WP_011236164.1">
    <property type="nucleotide sequence ID" value="NC_006513.1"/>
</dbReference>
<dbReference type="SMR" id="Q5P8D0"/>
<dbReference type="STRING" id="76114.ebA595"/>
<dbReference type="KEGG" id="eba:ebA595"/>
<dbReference type="eggNOG" id="COG2265">
    <property type="taxonomic scope" value="Bacteria"/>
</dbReference>
<dbReference type="HOGENOM" id="CLU_043022_0_0_4"/>
<dbReference type="OrthoDB" id="9804590at2"/>
<dbReference type="Proteomes" id="UP000006552">
    <property type="component" value="Chromosome"/>
</dbReference>
<dbReference type="GO" id="GO:0005829">
    <property type="term" value="C:cytosol"/>
    <property type="evidence" value="ECO:0007669"/>
    <property type="project" value="TreeGrafter"/>
</dbReference>
<dbReference type="GO" id="GO:0019843">
    <property type="term" value="F:rRNA binding"/>
    <property type="evidence" value="ECO:0007669"/>
    <property type="project" value="TreeGrafter"/>
</dbReference>
<dbReference type="GO" id="GO:0030697">
    <property type="term" value="F:tRNA (uracil(54)-C5)-methyltransferase activity, S-adenosyl methionine-dependent"/>
    <property type="evidence" value="ECO:0007669"/>
    <property type="project" value="UniProtKB-UniRule"/>
</dbReference>
<dbReference type="GO" id="GO:0000049">
    <property type="term" value="F:tRNA binding"/>
    <property type="evidence" value="ECO:0007669"/>
    <property type="project" value="TreeGrafter"/>
</dbReference>
<dbReference type="GO" id="GO:0030488">
    <property type="term" value="P:tRNA methylation"/>
    <property type="evidence" value="ECO:0007669"/>
    <property type="project" value="UniProtKB-UniRule"/>
</dbReference>
<dbReference type="FunFam" id="2.40.50.1070:FF:000001">
    <property type="entry name" value="tRNA/tmRNA (uracil-C(5))-methyltransferase"/>
    <property type="match status" value="1"/>
</dbReference>
<dbReference type="FunFam" id="3.40.50.150:FF:000012">
    <property type="entry name" value="tRNA/tmRNA (uracil-C(5))-methyltransferase"/>
    <property type="match status" value="1"/>
</dbReference>
<dbReference type="Gene3D" id="2.40.50.1070">
    <property type="match status" value="1"/>
</dbReference>
<dbReference type="Gene3D" id="3.40.50.150">
    <property type="entry name" value="Vaccinia Virus protein VP39"/>
    <property type="match status" value="1"/>
</dbReference>
<dbReference type="HAMAP" id="MF_01011">
    <property type="entry name" value="RNA_methyltr_TrmA"/>
    <property type="match status" value="1"/>
</dbReference>
<dbReference type="InterPro" id="IPR030390">
    <property type="entry name" value="MeTrfase_TrmA_AS"/>
</dbReference>
<dbReference type="InterPro" id="IPR030391">
    <property type="entry name" value="MeTrfase_TrmA_CS"/>
</dbReference>
<dbReference type="InterPro" id="IPR029063">
    <property type="entry name" value="SAM-dependent_MTases_sf"/>
</dbReference>
<dbReference type="InterPro" id="IPR011869">
    <property type="entry name" value="TrmA_MeTrfase"/>
</dbReference>
<dbReference type="InterPro" id="IPR010280">
    <property type="entry name" value="U5_MeTrfase_fam"/>
</dbReference>
<dbReference type="NCBIfam" id="TIGR02143">
    <property type="entry name" value="trmA_only"/>
    <property type="match status" value="1"/>
</dbReference>
<dbReference type="PANTHER" id="PTHR47790">
    <property type="entry name" value="TRNA/TMRNA (URACIL-C(5))-METHYLTRANSFERASE"/>
    <property type="match status" value="1"/>
</dbReference>
<dbReference type="PANTHER" id="PTHR47790:SF2">
    <property type="entry name" value="TRNA_TMRNA (URACIL-C(5))-METHYLTRANSFERASE"/>
    <property type="match status" value="1"/>
</dbReference>
<dbReference type="Pfam" id="PF05958">
    <property type="entry name" value="tRNA_U5-meth_tr"/>
    <property type="match status" value="1"/>
</dbReference>
<dbReference type="SUPFAM" id="SSF53335">
    <property type="entry name" value="S-adenosyl-L-methionine-dependent methyltransferases"/>
    <property type="match status" value="1"/>
</dbReference>
<dbReference type="PROSITE" id="PS51687">
    <property type="entry name" value="SAM_MT_RNA_M5U"/>
    <property type="match status" value="1"/>
</dbReference>
<dbReference type="PROSITE" id="PS01230">
    <property type="entry name" value="TRMA_1"/>
    <property type="match status" value="1"/>
</dbReference>
<dbReference type="PROSITE" id="PS01231">
    <property type="entry name" value="TRMA_2"/>
    <property type="match status" value="1"/>
</dbReference>
<organism>
    <name type="scientific">Aromatoleum aromaticum (strain DSM 19018 / LMG 30748 / EbN1)</name>
    <name type="common">Azoarcus sp. (strain EbN1)</name>
    <dbReference type="NCBI Taxonomy" id="76114"/>
    <lineage>
        <taxon>Bacteria</taxon>
        <taxon>Pseudomonadati</taxon>
        <taxon>Pseudomonadota</taxon>
        <taxon>Betaproteobacteria</taxon>
        <taxon>Rhodocyclales</taxon>
        <taxon>Rhodocyclaceae</taxon>
        <taxon>Aromatoleum</taxon>
    </lineage>
</organism>
<sequence length="368" mass="41362">MPLPAIDPAEYASQLADKVTQFKHAFTPFAVPEPTVFPSAPLHYRLRAEFRMWHDGERIDYAMFDPAEPKQPIAIEQFDIAAEPICAAMPRLRERLRASETLKRRLFQVEFLATLSGELMISLIYHRPLDESWEAAARELAAELNVQLIGRSRKQKIVLDRDWVLERFALDGRPLQYKQIEGSFTQPNGGVNRQMLGWACEQVRGVGGDLLELYCGNGNFTVALAPLFDRVLATEVSKTSVEAAHYNLAANDIGNVAMVRMSSDEISAALARTREFRRMKDVDLDRYRFSTLFVDPPRSGLDAPTVELARGFDRILYISCNPQTLQENVAALQATHGIAGAAVFDQFPYTRHLECGLLLTRRGGPRAP</sequence>
<reference key="1">
    <citation type="journal article" date="2005" name="Arch. Microbiol.">
        <title>The genome sequence of an anaerobic aromatic-degrading denitrifying bacterium, strain EbN1.</title>
        <authorList>
            <person name="Rabus R."/>
            <person name="Kube M."/>
            <person name="Heider J."/>
            <person name="Beck A."/>
            <person name="Heitmann K."/>
            <person name="Widdel F."/>
            <person name="Reinhardt R."/>
        </authorList>
    </citation>
    <scope>NUCLEOTIDE SEQUENCE [LARGE SCALE GENOMIC DNA]</scope>
    <source>
        <strain>DSM 19018 / LMG 30748 / EbN1</strain>
    </source>
</reference>
<proteinExistence type="inferred from homology"/>
<evidence type="ECO:0000255" key="1">
    <source>
        <dbReference type="HAMAP-Rule" id="MF_01011"/>
    </source>
</evidence>
<comment type="function">
    <text evidence="1">Dual-specificity methyltransferase that catalyzes the formation of 5-methyluridine at position 54 (m5U54) in all tRNAs, and that of position 341 (m5U341) in tmRNA (transfer-mRNA).</text>
</comment>
<comment type="catalytic activity">
    <reaction evidence="1">
        <text>uridine(54) in tRNA + S-adenosyl-L-methionine = 5-methyluridine(54) in tRNA + S-adenosyl-L-homocysteine + H(+)</text>
        <dbReference type="Rhea" id="RHEA:42712"/>
        <dbReference type="Rhea" id="RHEA-COMP:10167"/>
        <dbReference type="Rhea" id="RHEA-COMP:10193"/>
        <dbReference type="ChEBI" id="CHEBI:15378"/>
        <dbReference type="ChEBI" id="CHEBI:57856"/>
        <dbReference type="ChEBI" id="CHEBI:59789"/>
        <dbReference type="ChEBI" id="CHEBI:65315"/>
        <dbReference type="ChEBI" id="CHEBI:74447"/>
        <dbReference type="EC" id="2.1.1.35"/>
    </reaction>
</comment>
<comment type="catalytic activity">
    <reaction evidence="1">
        <text>uridine(341) in tmRNA + S-adenosyl-L-methionine = 5-methyluridine(341) in tmRNA + S-adenosyl-L-homocysteine + H(+)</text>
        <dbReference type="Rhea" id="RHEA:43612"/>
        <dbReference type="Rhea" id="RHEA-COMP:10630"/>
        <dbReference type="Rhea" id="RHEA-COMP:10631"/>
        <dbReference type="ChEBI" id="CHEBI:15378"/>
        <dbReference type="ChEBI" id="CHEBI:57856"/>
        <dbReference type="ChEBI" id="CHEBI:59789"/>
        <dbReference type="ChEBI" id="CHEBI:65315"/>
        <dbReference type="ChEBI" id="CHEBI:74447"/>
    </reaction>
</comment>
<comment type="similarity">
    <text evidence="1">Belongs to the class I-like SAM-binding methyltransferase superfamily. RNA M5U methyltransferase family. TrmA subfamily.</text>
</comment>
<protein>
    <recommendedName>
        <fullName evidence="1">tRNA/tmRNA (uracil-C(5))-methyltransferase</fullName>
        <ecNumber evidence="1">2.1.1.-</ecNumber>
        <ecNumber evidence="1">2.1.1.35</ecNumber>
    </recommendedName>
    <alternativeName>
        <fullName evidence="1">tRNA (uracil(54)-C(5))-methyltransferase</fullName>
    </alternativeName>
    <alternativeName>
        <fullName evidence="1">tRNA(m5U54)-methyltransferase</fullName>
        <shortName evidence="1">RUMT</shortName>
    </alternativeName>
    <alternativeName>
        <fullName evidence="1">tmRNA (uracil(341)-C(5))-methyltransferase</fullName>
    </alternativeName>
</protein>
<name>TRMA_AROAE</name>
<accession>Q5P8D0</accession>
<feature type="chain" id="PRO_0000281434" description="tRNA/tmRNA (uracil-C(5))-methyltransferase">
    <location>
        <begin position="1"/>
        <end position="368"/>
    </location>
</feature>
<feature type="active site" description="Nucleophile" evidence="1">
    <location>
        <position position="320"/>
    </location>
</feature>
<feature type="active site" description="Proton acceptor" evidence="1">
    <location>
        <position position="354"/>
    </location>
</feature>
<feature type="binding site" evidence="1">
    <location>
        <position position="186"/>
    </location>
    <ligand>
        <name>S-adenosyl-L-methionine</name>
        <dbReference type="ChEBI" id="CHEBI:59789"/>
    </ligand>
</feature>
<feature type="binding site" evidence="1">
    <location>
        <position position="214"/>
    </location>
    <ligand>
        <name>S-adenosyl-L-methionine</name>
        <dbReference type="ChEBI" id="CHEBI:59789"/>
    </ligand>
</feature>
<feature type="binding site" evidence="1">
    <location>
        <position position="219"/>
    </location>
    <ligand>
        <name>S-adenosyl-L-methionine</name>
        <dbReference type="ChEBI" id="CHEBI:59789"/>
    </ligand>
</feature>
<feature type="binding site" evidence="1">
    <location>
        <position position="235"/>
    </location>
    <ligand>
        <name>S-adenosyl-L-methionine</name>
        <dbReference type="ChEBI" id="CHEBI:59789"/>
    </ligand>
</feature>
<feature type="binding site" evidence="1">
    <location>
        <position position="295"/>
    </location>
    <ligand>
        <name>S-adenosyl-L-methionine</name>
        <dbReference type="ChEBI" id="CHEBI:59789"/>
    </ligand>
</feature>
<keyword id="KW-0489">Methyltransferase</keyword>
<keyword id="KW-1185">Reference proteome</keyword>
<keyword id="KW-0949">S-adenosyl-L-methionine</keyword>
<keyword id="KW-0808">Transferase</keyword>
<keyword id="KW-0819">tRNA processing</keyword>